<feature type="chain" id="PRO_0000311910" description="Leucine-rich repeat-containing protein 43">
    <location>
        <begin position="1"/>
        <end position="667"/>
    </location>
</feature>
<feature type="repeat" description="LRR 1">
    <location>
        <begin position="148"/>
        <end position="169"/>
    </location>
</feature>
<feature type="repeat" description="LRR 2">
    <location>
        <begin position="170"/>
        <end position="191"/>
    </location>
</feature>
<feature type="repeat" description="LRR 3">
    <location>
        <begin position="194"/>
        <end position="213"/>
    </location>
</feature>
<feature type="repeat" description="LRR 4">
    <location>
        <begin position="221"/>
        <end position="242"/>
    </location>
</feature>
<feature type="domain" description="LRRCT">
    <location>
        <begin position="256"/>
        <end position="294"/>
    </location>
</feature>
<feature type="region of interest" description="Disordered" evidence="1">
    <location>
        <begin position="1"/>
        <end position="24"/>
    </location>
</feature>
<feature type="region of interest" description="Disordered" evidence="1">
    <location>
        <begin position="374"/>
        <end position="407"/>
    </location>
</feature>
<feature type="region of interest" description="Disordered" evidence="1">
    <location>
        <begin position="533"/>
        <end position="570"/>
    </location>
</feature>
<feature type="region of interest" description="Disordered" evidence="1">
    <location>
        <begin position="616"/>
        <end position="640"/>
    </location>
</feature>
<feature type="compositionally biased region" description="Polar residues" evidence="1">
    <location>
        <begin position="1"/>
        <end position="11"/>
    </location>
</feature>
<feature type="compositionally biased region" description="Acidic residues" evidence="1">
    <location>
        <begin position="377"/>
        <end position="386"/>
    </location>
</feature>
<feature type="compositionally biased region" description="Basic residues" evidence="1">
    <location>
        <begin position="390"/>
        <end position="399"/>
    </location>
</feature>
<feature type="compositionally biased region" description="Basic and acidic residues" evidence="1">
    <location>
        <begin position="540"/>
        <end position="553"/>
    </location>
</feature>
<feature type="compositionally biased region" description="Basic residues" evidence="1">
    <location>
        <begin position="617"/>
        <end position="627"/>
    </location>
</feature>
<feature type="splice variant" id="VSP_029638" description="In isoform 2." evidence="2">
    <location>
        <begin position="515"/>
        <end position="521"/>
    </location>
</feature>
<accession>Q3V0L5</accession>
<accession>Q3TIS6</accession>
<accession>Q3TJS5</accession>
<keyword id="KW-0025">Alternative splicing</keyword>
<keyword id="KW-0433">Leucine-rich repeat</keyword>
<keyword id="KW-1185">Reference proteome</keyword>
<keyword id="KW-0677">Repeat</keyword>
<evidence type="ECO:0000256" key="1">
    <source>
        <dbReference type="SAM" id="MobiDB-lite"/>
    </source>
</evidence>
<evidence type="ECO:0000303" key="2">
    <source>
    </source>
</evidence>
<evidence type="ECO:0000305" key="3"/>
<proteinExistence type="evidence at transcript level"/>
<name>LRC43_MOUSE</name>
<comment type="alternative products">
    <event type="alternative splicing"/>
    <isoform>
        <id>Q3V0L5-1</id>
        <name>1</name>
        <sequence type="displayed"/>
    </isoform>
    <isoform>
        <id>Q3V0L5-2</id>
        <name>2</name>
        <sequence type="described" ref="VSP_029638"/>
    </isoform>
</comment>
<comment type="sequence caution" evidence="3">
    <conflict type="erroneous initiation">
        <sequence resource="EMBL-CDS" id="BAE39420"/>
    </conflict>
</comment>
<reference key="1">
    <citation type="journal article" date="2005" name="Science">
        <title>The transcriptional landscape of the mammalian genome.</title>
        <authorList>
            <person name="Carninci P."/>
            <person name="Kasukawa T."/>
            <person name="Katayama S."/>
            <person name="Gough J."/>
            <person name="Frith M.C."/>
            <person name="Maeda N."/>
            <person name="Oyama R."/>
            <person name="Ravasi T."/>
            <person name="Lenhard B."/>
            <person name="Wells C."/>
            <person name="Kodzius R."/>
            <person name="Shimokawa K."/>
            <person name="Bajic V.B."/>
            <person name="Brenner S.E."/>
            <person name="Batalov S."/>
            <person name="Forrest A.R."/>
            <person name="Zavolan M."/>
            <person name="Davis M.J."/>
            <person name="Wilming L.G."/>
            <person name="Aidinis V."/>
            <person name="Allen J.E."/>
            <person name="Ambesi-Impiombato A."/>
            <person name="Apweiler R."/>
            <person name="Aturaliya R.N."/>
            <person name="Bailey T.L."/>
            <person name="Bansal M."/>
            <person name="Baxter L."/>
            <person name="Beisel K.W."/>
            <person name="Bersano T."/>
            <person name="Bono H."/>
            <person name="Chalk A.M."/>
            <person name="Chiu K.P."/>
            <person name="Choudhary V."/>
            <person name="Christoffels A."/>
            <person name="Clutterbuck D.R."/>
            <person name="Crowe M.L."/>
            <person name="Dalla E."/>
            <person name="Dalrymple B.P."/>
            <person name="de Bono B."/>
            <person name="Della Gatta G."/>
            <person name="di Bernardo D."/>
            <person name="Down T."/>
            <person name="Engstrom P."/>
            <person name="Fagiolini M."/>
            <person name="Faulkner G."/>
            <person name="Fletcher C.F."/>
            <person name="Fukushima T."/>
            <person name="Furuno M."/>
            <person name="Futaki S."/>
            <person name="Gariboldi M."/>
            <person name="Georgii-Hemming P."/>
            <person name="Gingeras T.R."/>
            <person name="Gojobori T."/>
            <person name="Green R.E."/>
            <person name="Gustincich S."/>
            <person name="Harbers M."/>
            <person name="Hayashi Y."/>
            <person name="Hensch T.K."/>
            <person name="Hirokawa N."/>
            <person name="Hill D."/>
            <person name="Huminiecki L."/>
            <person name="Iacono M."/>
            <person name="Ikeo K."/>
            <person name="Iwama A."/>
            <person name="Ishikawa T."/>
            <person name="Jakt M."/>
            <person name="Kanapin A."/>
            <person name="Katoh M."/>
            <person name="Kawasawa Y."/>
            <person name="Kelso J."/>
            <person name="Kitamura H."/>
            <person name="Kitano H."/>
            <person name="Kollias G."/>
            <person name="Krishnan S.P."/>
            <person name="Kruger A."/>
            <person name="Kummerfeld S.K."/>
            <person name="Kurochkin I.V."/>
            <person name="Lareau L.F."/>
            <person name="Lazarevic D."/>
            <person name="Lipovich L."/>
            <person name="Liu J."/>
            <person name="Liuni S."/>
            <person name="McWilliam S."/>
            <person name="Madan Babu M."/>
            <person name="Madera M."/>
            <person name="Marchionni L."/>
            <person name="Matsuda H."/>
            <person name="Matsuzawa S."/>
            <person name="Miki H."/>
            <person name="Mignone F."/>
            <person name="Miyake S."/>
            <person name="Morris K."/>
            <person name="Mottagui-Tabar S."/>
            <person name="Mulder N."/>
            <person name="Nakano N."/>
            <person name="Nakauchi H."/>
            <person name="Ng P."/>
            <person name="Nilsson R."/>
            <person name="Nishiguchi S."/>
            <person name="Nishikawa S."/>
            <person name="Nori F."/>
            <person name="Ohara O."/>
            <person name="Okazaki Y."/>
            <person name="Orlando V."/>
            <person name="Pang K.C."/>
            <person name="Pavan W.J."/>
            <person name="Pavesi G."/>
            <person name="Pesole G."/>
            <person name="Petrovsky N."/>
            <person name="Piazza S."/>
            <person name="Reed J."/>
            <person name="Reid J.F."/>
            <person name="Ring B.Z."/>
            <person name="Ringwald M."/>
            <person name="Rost B."/>
            <person name="Ruan Y."/>
            <person name="Salzberg S.L."/>
            <person name="Sandelin A."/>
            <person name="Schneider C."/>
            <person name="Schoenbach C."/>
            <person name="Sekiguchi K."/>
            <person name="Semple C.A."/>
            <person name="Seno S."/>
            <person name="Sessa L."/>
            <person name="Sheng Y."/>
            <person name="Shibata Y."/>
            <person name="Shimada H."/>
            <person name="Shimada K."/>
            <person name="Silva D."/>
            <person name="Sinclair B."/>
            <person name="Sperling S."/>
            <person name="Stupka E."/>
            <person name="Sugiura K."/>
            <person name="Sultana R."/>
            <person name="Takenaka Y."/>
            <person name="Taki K."/>
            <person name="Tammoja K."/>
            <person name="Tan S.L."/>
            <person name="Tang S."/>
            <person name="Taylor M.S."/>
            <person name="Tegner J."/>
            <person name="Teichmann S.A."/>
            <person name="Ueda H.R."/>
            <person name="van Nimwegen E."/>
            <person name="Verardo R."/>
            <person name="Wei C.L."/>
            <person name="Yagi K."/>
            <person name="Yamanishi H."/>
            <person name="Zabarovsky E."/>
            <person name="Zhu S."/>
            <person name="Zimmer A."/>
            <person name="Hide W."/>
            <person name="Bult C."/>
            <person name="Grimmond S.M."/>
            <person name="Teasdale R.D."/>
            <person name="Liu E.T."/>
            <person name="Brusic V."/>
            <person name="Quackenbush J."/>
            <person name="Wahlestedt C."/>
            <person name="Mattick J.S."/>
            <person name="Hume D.A."/>
            <person name="Kai C."/>
            <person name="Sasaki D."/>
            <person name="Tomaru Y."/>
            <person name="Fukuda S."/>
            <person name="Kanamori-Katayama M."/>
            <person name="Suzuki M."/>
            <person name="Aoki J."/>
            <person name="Arakawa T."/>
            <person name="Iida J."/>
            <person name="Imamura K."/>
            <person name="Itoh M."/>
            <person name="Kato T."/>
            <person name="Kawaji H."/>
            <person name="Kawagashira N."/>
            <person name="Kawashima T."/>
            <person name="Kojima M."/>
            <person name="Kondo S."/>
            <person name="Konno H."/>
            <person name="Nakano K."/>
            <person name="Ninomiya N."/>
            <person name="Nishio T."/>
            <person name="Okada M."/>
            <person name="Plessy C."/>
            <person name="Shibata K."/>
            <person name="Shiraki T."/>
            <person name="Suzuki S."/>
            <person name="Tagami M."/>
            <person name="Waki K."/>
            <person name="Watahiki A."/>
            <person name="Okamura-Oho Y."/>
            <person name="Suzuki H."/>
            <person name="Kawai J."/>
            <person name="Hayashizaki Y."/>
        </authorList>
    </citation>
    <scope>NUCLEOTIDE SEQUENCE [LARGE SCALE MRNA] (ISOFORMS 1 AND 2)</scope>
    <source>
        <strain>C57BL/6J</strain>
        <tissue>Placenta</tissue>
        <tissue>Testis</tissue>
    </source>
</reference>
<dbReference type="EMBL" id="AK133051">
    <property type="protein sequence ID" value="BAE21489.1"/>
    <property type="molecule type" value="mRNA"/>
</dbReference>
<dbReference type="EMBL" id="AK167318">
    <property type="protein sequence ID" value="BAE39420.1"/>
    <property type="status" value="ALT_INIT"/>
    <property type="molecule type" value="mRNA"/>
</dbReference>
<dbReference type="EMBL" id="AK167729">
    <property type="protein sequence ID" value="BAE39770.1"/>
    <property type="molecule type" value="mRNA"/>
</dbReference>
<dbReference type="CCDS" id="CCDS19664.1">
    <molecule id="Q3V0L5-1"/>
</dbReference>
<dbReference type="CCDS" id="CCDS71662.1">
    <molecule id="Q3V0L5-2"/>
</dbReference>
<dbReference type="RefSeq" id="NP_001028633.1">
    <molecule id="Q3V0L5-1"/>
    <property type="nucleotide sequence ID" value="NM_001033461.3"/>
</dbReference>
<dbReference type="RefSeq" id="NP_001276750.1">
    <molecule id="Q3V0L5-2"/>
    <property type="nucleotide sequence ID" value="NM_001289821.1"/>
</dbReference>
<dbReference type="RefSeq" id="NP_001276751.1">
    <property type="nucleotide sequence ID" value="NM_001289822.1"/>
</dbReference>
<dbReference type="SMR" id="Q3V0L5"/>
<dbReference type="FunCoup" id="Q3V0L5">
    <property type="interactions" value="1"/>
</dbReference>
<dbReference type="STRING" id="10090.ENSMUSP00000091885"/>
<dbReference type="GlyGen" id="Q3V0L5">
    <property type="glycosylation" value="1 site"/>
</dbReference>
<dbReference type="iPTMnet" id="Q3V0L5"/>
<dbReference type="PhosphoSitePlus" id="Q3V0L5"/>
<dbReference type="PaxDb" id="10090-ENSMUSP00000091885"/>
<dbReference type="ProteomicsDB" id="290154">
    <molecule id="Q3V0L5-1"/>
</dbReference>
<dbReference type="ProteomicsDB" id="290155">
    <molecule id="Q3V0L5-2"/>
</dbReference>
<dbReference type="Antibodypedia" id="52948">
    <property type="antibodies" value="24 antibodies from 14 providers"/>
</dbReference>
<dbReference type="Ensembl" id="ENSMUST00000094327.10">
    <molecule id="Q3V0L5-1"/>
    <property type="protein sequence ID" value="ENSMUSP00000091885.4"/>
    <property type="gene ID" value="ENSMUSG00000063409.13"/>
</dbReference>
<dbReference type="Ensembl" id="ENSMUST00000121444.2">
    <molecule id="Q3V0L5-2"/>
    <property type="protein sequence ID" value="ENSMUSP00000113933.2"/>
    <property type="gene ID" value="ENSMUSG00000063409.13"/>
</dbReference>
<dbReference type="GeneID" id="381741"/>
<dbReference type="KEGG" id="mmu:381741"/>
<dbReference type="UCSC" id="uc008znu.2">
    <molecule id="Q3V0L5-1"/>
    <property type="organism name" value="mouse"/>
</dbReference>
<dbReference type="UCSC" id="uc008znv.2">
    <molecule id="Q3V0L5-2"/>
    <property type="organism name" value="mouse"/>
</dbReference>
<dbReference type="AGR" id="MGI:2685907"/>
<dbReference type="CTD" id="254050"/>
<dbReference type="MGI" id="MGI:2685907">
    <property type="gene designation" value="Lrrc43"/>
</dbReference>
<dbReference type="VEuPathDB" id="HostDB:ENSMUSG00000063409"/>
<dbReference type="eggNOG" id="KOG0531">
    <property type="taxonomic scope" value="Eukaryota"/>
</dbReference>
<dbReference type="GeneTree" id="ENSGT00390000008994"/>
<dbReference type="HOGENOM" id="CLU_028116_0_0_1"/>
<dbReference type="InParanoid" id="Q3V0L5"/>
<dbReference type="OMA" id="AEVIPCN"/>
<dbReference type="OrthoDB" id="433501at2759"/>
<dbReference type="PhylomeDB" id="Q3V0L5"/>
<dbReference type="TreeFam" id="TF330806"/>
<dbReference type="BioGRID-ORCS" id="381741">
    <property type="hits" value="1 hit in 77 CRISPR screens"/>
</dbReference>
<dbReference type="ChiTaRS" id="Lrrc43">
    <property type="organism name" value="mouse"/>
</dbReference>
<dbReference type="PRO" id="PR:Q3V0L5"/>
<dbReference type="Proteomes" id="UP000000589">
    <property type="component" value="Chromosome 5"/>
</dbReference>
<dbReference type="RNAct" id="Q3V0L5">
    <property type="molecule type" value="protein"/>
</dbReference>
<dbReference type="Bgee" id="ENSMUSG00000063409">
    <property type="expression patterns" value="Expressed in testis and 18 other cell types or tissues"/>
</dbReference>
<dbReference type="ExpressionAtlas" id="Q3V0L5">
    <property type="expression patterns" value="baseline and differential"/>
</dbReference>
<dbReference type="Gene3D" id="3.80.10.10">
    <property type="entry name" value="Ribonuclease Inhibitor"/>
    <property type="match status" value="1"/>
</dbReference>
<dbReference type="InterPro" id="IPR050576">
    <property type="entry name" value="Cilia_flagella_integrity"/>
</dbReference>
<dbReference type="InterPro" id="IPR032675">
    <property type="entry name" value="LRR_dom_sf"/>
</dbReference>
<dbReference type="PANTHER" id="PTHR45973:SF35">
    <property type="entry name" value="LEUCINE-RICH REPEAT-CONTAINING PROTEIN 43"/>
    <property type="match status" value="1"/>
</dbReference>
<dbReference type="PANTHER" id="PTHR45973">
    <property type="entry name" value="PROTEIN PHOSPHATASE 1 REGULATORY SUBUNIT SDS22-RELATED"/>
    <property type="match status" value="1"/>
</dbReference>
<dbReference type="SUPFAM" id="SSF52058">
    <property type="entry name" value="L domain-like"/>
    <property type="match status" value="1"/>
</dbReference>
<sequence>METSESSTSDYRQTEGEGEGVPGTLSTAVCEHLRKLCLREFPCGIGSWNKSRFLPQKCRVWRELVPKEEETLVPEEETVEALLGLVRSNHSPWAMLKDASAEDRFLRELAIQNPLMIKDTFFYSYFRSLRVVNKGVSLVDKDLLKFLKLEELVLSANKIEEIDANNLPPTLKVLELYGNLIASMECLCSAPPPRLQHLGLGHNKLLGPLESLYVTSHNWPQLVSLDLGFNNLTDLQNMILGLSTLRHLRLLVLQGNPLSLVPYYRGFTIDSLAHLCVLDDITVSPNEKHQFRGLNIHGDLLAREAQFVVTIGNVRGVLDSSILDPEPGPDGPFISYSYYVTYDFVEDEDMERNVSGLVEATHHDSVLDEIDKHFSGTDEEDQQEDPLDGRHRHRGRQRFHPGSTEEMSKELSEFIAKEMSQMAEGSVESGITEVDWSETSISIHSAPLPQSIDSSEELAKLRPKIDIQLCPSPGTVLFNTVHKPWSDVIPCTYEMKHTLKELIRVKAFLLAGTTVSIVEEKILSWPVVPTPVESPLPAKKGKDNNKKKEPAKDKVHKKKKEPPRELRQDPPVLTVLGSGLVYLEPLLAGEAVVSTVCNFGVVRTLETDRLTHARDSKKVKKSLKKDRSKTVPPTMESGYQPEPLSVEVQIQLHQYRSVEEAFLSLID</sequence>
<gene>
    <name type="primary">Lrrc43</name>
    <name type="synonym">Gm1061</name>
</gene>
<organism>
    <name type="scientific">Mus musculus</name>
    <name type="common">Mouse</name>
    <dbReference type="NCBI Taxonomy" id="10090"/>
    <lineage>
        <taxon>Eukaryota</taxon>
        <taxon>Metazoa</taxon>
        <taxon>Chordata</taxon>
        <taxon>Craniata</taxon>
        <taxon>Vertebrata</taxon>
        <taxon>Euteleostomi</taxon>
        <taxon>Mammalia</taxon>
        <taxon>Eutheria</taxon>
        <taxon>Euarchontoglires</taxon>
        <taxon>Glires</taxon>
        <taxon>Rodentia</taxon>
        <taxon>Myomorpha</taxon>
        <taxon>Muroidea</taxon>
        <taxon>Muridae</taxon>
        <taxon>Murinae</taxon>
        <taxon>Mus</taxon>
        <taxon>Mus</taxon>
    </lineage>
</organism>
<protein>
    <recommendedName>
        <fullName>Leucine-rich repeat-containing protein 43</fullName>
    </recommendedName>
</protein>